<proteinExistence type="inferred from homology"/>
<comment type="function">
    <text evidence="2">Component of the ubiquinol-cytochrome c reductase complex (complex III or cytochrome b-c1 complex) that is part of the mitochondrial respiratory chain. The b-c1 complex mediates electron transfer from ubiquinol to cytochrome c. Contributes to the generation of a proton gradient across the mitochondrial membrane that is then used for ATP synthesis.</text>
</comment>
<comment type="cofactor">
    <cofactor evidence="2">
        <name>heme b</name>
        <dbReference type="ChEBI" id="CHEBI:60344"/>
    </cofactor>
    <text evidence="2">Binds 2 heme b groups non-covalently.</text>
</comment>
<comment type="subunit">
    <text evidence="2">The cytochrome bc1 complex contains 11 subunits: 3 respiratory subunits (MT-CYB, CYC1 and UQCRFS1), 2 core proteins (UQCRC1 and UQCRC2) and 6 low-molecular weight proteins (UQCRH/QCR6, UQCRB/QCR7, UQCRQ/QCR8, UQCR10/QCR9, UQCR11/QCR10 and a cleavage product of UQCRFS1). This cytochrome bc1 complex then forms a dimer.</text>
</comment>
<comment type="subcellular location">
    <subcellularLocation>
        <location evidence="2">Mitochondrion inner membrane</location>
        <topology evidence="2">Multi-pass membrane protein</topology>
    </subcellularLocation>
</comment>
<comment type="miscellaneous">
    <text evidence="1">Heme 1 (or BL or b562) is low-potential and absorbs at about 562 nm, and heme 2 (or BH or b566) is high-potential and absorbs at about 566 nm.</text>
</comment>
<comment type="similarity">
    <text evidence="3 4">Belongs to the cytochrome b family.</text>
</comment>
<comment type="caution">
    <text evidence="2">The full-length protein contains only eight transmembrane helices, not nine as predicted by bioinformatics tools.</text>
</comment>
<organism>
    <name type="scientific">Microryzomys minutus</name>
    <name type="common">Forest small rice rat</name>
    <name type="synonym">Hesperomys minutus</name>
    <dbReference type="NCBI Taxonomy" id="37025"/>
    <lineage>
        <taxon>Eukaryota</taxon>
        <taxon>Metazoa</taxon>
        <taxon>Chordata</taxon>
        <taxon>Craniata</taxon>
        <taxon>Vertebrata</taxon>
        <taxon>Euteleostomi</taxon>
        <taxon>Mammalia</taxon>
        <taxon>Eutheria</taxon>
        <taxon>Euarchontoglires</taxon>
        <taxon>Glires</taxon>
        <taxon>Rodentia</taxon>
        <taxon>Myomorpha</taxon>
        <taxon>Muroidea</taxon>
        <taxon>Cricetidae</taxon>
        <taxon>Sigmodontinae</taxon>
        <taxon>Microryzomys</taxon>
    </lineage>
</organism>
<accession>Q9TFX5</accession>
<protein>
    <recommendedName>
        <fullName>Cytochrome b</fullName>
    </recommendedName>
    <alternativeName>
        <fullName>Complex III subunit 3</fullName>
    </alternativeName>
    <alternativeName>
        <fullName>Complex III subunit III</fullName>
    </alternativeName>
    <alternativeName>
        <fullName>Cytochrome b-c1 complex subunit 3</fullName>
    </alternativeName>
    <alternativeName>
        <fullName>Ubiquinol-cytochrome-c reductase complex cytochrome b subunit</fullName>
    </alternativeName>
</protein>
<gene>
    <name type="primary">MT-CYB</name>
    <name type="synonym">COB</name>
    <name type="synonym">CYTB</name>
    <name type="synonym">MTCYB</name>
</gene>
<sequence>MTIMRKNHPLLKIINHSFIDLPTPSNISAWWNFGSLLGICLMVQIITGLFLAMHYTSDTTTAFSSVTHICRDVNYGWLIRYAHANGASMFFICLFIHVGRGIYYGSYMLNETWNIGIILLLTTMATAFVGYVLPWGQMSFWGATVITNLLSAIPYIGTTLVEWIWGGFSVDKATLTRFFAFHFILPFIITALVLVHLLFLHETGSNNPSGLNSDSDKIPFHPYYTIKDILGVLLLLMVLMFLVLFFPDVLGDPDNYTPANPLNTPAHIKPEWYFLFAYAILRSIPNKLGGVLALLLSILILAAFPLLNSSKQHGLIYRPITQTLYWIFVANLLILTWIGGQPVEYPFTTIGQISSIMYFMIIVIFMPMASMVENNILKFI</sequence>
<geneLocation type="mitochondrion"/>
<name>CYB_MICMS</name>
<dbReference type="EMBL" id="AF108698">
    <property type="protein sequence ID" value="AAD45480.1"/>
    <property type="molecule type" value="Genomic_DNA"/>
</dbReference>
<dbReference type="SMR" id="Q9TFX5"/>
<dbReference type="GO" id="GO:0005743">
    <property type="term" value="C:mitochondrial inner membrane"/>
    <property type="evidence" value="ECO:0007669"/>
    <property type="project" value="UniProtKB-SubCell"/>
</dbReference>
<dbReference type="GO" id="GO:0045275">
    <property type="term" value="C:respiratory chain complex III"/>
    <property type="evidence" value="ECO:0007669"/>
    <property type="project" value="InterPro"/>
</dbReference>
<dbReference type="GO" id="GO:0046872">
    <property type="term" value="F:metal ion binding"/>
    <property type="evidence" value="ECO:0007669"/>
    <property type="project" value="UniProtKB-KW"/>
</dbReference>
<dbReference type="GO" id="GO:0008121">
    <property type="term" value="F:ubiquinol-cytochrome-c reductase activity"/>
    <property type="evidence" value="ECO:0007669"/>
    <property type="project" value="InterPro"/>
</dbReference>
<dbReference type="GO" id="GO:0006122">
    <property type="term" value="P:mitochondrial electron transport, ubiquinol to cytochrome c"/>
    <property type="evidence" value="ECO:0007669"/>
    <property type="project" value="TreeGrafter"/>
</dbReference>
<dbReference type="CDD" id="cd00290">
    <property type="entry name" value="cytochrome_b_C"/>
    <property type="match status" value="1"/>
</dbReference>
<dbReference type="CDD" id="cd00284">
    <property type="entry name" value="Cytochrome_b_N"/>
    <property type="match status" value="1"/>
</dbReference>
<dbReference type="FunFam" id="1.20.810.10:FF:000002">
    <property type="entry name" value="Cytochrome b"/>
    <property type="match status" value="1"/>
</dbReference>
<dbReference type="Gene3D" id="1.20.810.10">
    <property type="entry name" value="Cytochrome Bc1 Complex, Chain C"/>
    <property type="match status" value="1"/>
</dbReference>
<dbReference type="InterPro" id="IPR005798">
    <property type="entry name" value="Cyt_b/b6_C"/>
</dbReference>
<dbReference type="InterPro" id="IPR036150">
    <property type="entry name" value="Cyt_b/b6_C_sf"/>
</dbReference>
<dbReference type="InterPro" id="IPR005797">
    <property type="entry name" value="Cyt_b/b6_N"/>
</dbReference>
<dbReference type="InterPro" id="IPR027387">
    <property type="entry name" value="Cytb/b6-like_sf"/>
</dbReference>
<dbReference type="InterPro" id="IPR030689">
    <property type="entry name" value="Cytochrome_b"/>
</dbReference>
<dbReference type="InterPro" id="IPR048260">
    <property type="entry name" value="Cytochrome_b_C_euk/bac"/>
</dbReference>
<dbReference type="InterPro" id="IPR048259">
    <property type="entry name" value="Cytochrome_b_N_euk/bac"/>
</dbReference>
<dbReference type="InterPro" id="IPR016174">
    <property type="entry name" value="Di-haem_cyt_TM"/>
</dbReference>
<dbReference type="PANTHER" id="PTHR19271">
    <property type="entry name" value="CYTOCHROME B"/>
    <property type="match status" value="1"/>
</dbReference>
<dbReference type="PANTHER" id="PTHR19271:SF16">
    <property type="entry name" value="CYTOCHROME B"/>
    <property type="match status" value="1"/>
</dbReference>
<dbReference type="Pfam" id="PF00032">
    <property type="entry name" value="Cytochrom_B_C"/>
    <property type="match status" value="1"/>
</dbReference>
<dbReference type="Pfam" id="PF00033">
    <property type="entry name" value="Cytochrome_B"/>
    <property type="match status" value="1"/>
</dbReference>
<dbReference type="PIRSF" id="PIRSF038885">
    <property type="entry name" value="COB"/>
    <property type="match status" value="1"/>
</dbReference>
<dbReference type="SUPFAM" id="SSF81648">
    <property type="entry name" value="a domain/subunit of cytochrome bc1 complex (Ubiquinol-cytochrome c reductase)"/>
    <property type="match status" value="1"/>
</dbReference>
<dbReference type="SUPFAM" id="SSF81342">
    <property type="entry name" value="Transmembrane di-heme cytochromes"/>
    <property type="match status" value="1"/>
</dbReference>
<dbReference type="PROSITE" id="PS51003">
    <property type="entry name" value="CYTB_CTER"/>
    <property type="match status" value="1"/>
</dbReference>
<dbReference type="PROSITE" id="PS51002">
    <property type="entry name" value="CYTB_NTER"/>
    <property type="match status" value="1"/>
</dbReference>
<evidence type="ECO:0000250" key="1"/>
<evidence type="ECO:0000250" key="2">
    <source>
        <dbReference type="UniProtKB" id="P00157"/>
    </source>
</evidence>
<evidence type="ECO:0000255" key="3">
    <source>
        <dbReference type="PROSITE-ProRule" id="PRU00967"/>
    </source>
</evidence>
<evidence type="ECO:0000255" key="4">
    <source>
        <dbReference type="PROSITE-ProRule" id="PRU00968"/>
    </source>
</evidence>
<feature type="chain" id="PRO_0000061186" description="Cytochrome b">
    <location>
        <begin position="1"/>
        <end position="380"/>
    </location>
</feature>
<feature type="transmembrane region" description="Helical" evidence="2">
    <location>
        <begin position="33"/>
        <end position="53"/>
    </location>
</feature>
<feature type="transmembrane region" description="Helical" evidence="2">
    <location>
        <begin position="77"/>
        <end position="98"/>
    </location>
</feature>
<feature type="transmembrane region" description="Helical" evidence="2">
    <location>
        <begin position="113"/>
        <end position="133"/>
    </location>
</feature>
<feature type="transmembrane region" description="Helical" evidence="2">
    <location>
        <begin position="178"/>
        <end position="198"/>
    </location>
</feature>
<feature type="transmembrane region" description="Helical" evidence="2">
    <location>
        <begin position="226"/>
        <end position="246"/>
    </location>
</feature>
<feature type="transmembrane region" description="Helical" evidence="2">
    <location>
        <begin position="288"/>
        <end position="308"/>
    </location>
</feature>
<feature type="transmembrane region" description="Helical" evidence="2">
    <location>
        <begin position="320"/>
        <end position="340"/>
    </location>
</feature>
<feature type="transmembrane region" description="Helical" evidence="2">
    <location>
        <begin position="347"/>
        <end position="367"/>
    </location>
</feature>
<feature type="binding site" description="axial binding residue" evidence="2">
    <location>
        <position position="83"/>
    </location>
    <ligand>
        <name>heme b</name>
        <dbReference type="ChEBI" id="CHEBI:60344"/>
        <label>b562</label>
    </ligand>
    <ligandPart>
        <name>Fe</name>
        <dbReference type="ChEBI" id="CHEBI:18248"/>
    </ligandPart>
</feature>
<feature type="binding site" description="axial binding residue" evidence="2">
    <location>
        <position position="97"/>
    </location>
    <ligand>
        <name>heme b</name>
        <dbReference type="ChEBI" id="CHEBI:60344"/>
        <label>b566</label>
    </ligand>
    <ligandPart>
        <name>Fe</name>
        <dbReference type="ChEBI" id="CHEBI:18248"/>
    </ligandPart>
</feature>
<feature type="binding site" description="axial binding residue" evidence="2">
    <location>
        <position position="182"/>
    </location>
    <ligand>
        <name>heme b</name>
        <dbReference type="ChEBI" id="CHEBI:60344"/>
        <label>b562</label>
    </ligand>
    <ligandPart>
        <name>Fe</name>
        <dbReference type="ChEBI" id="CHEBI:18248"/>
    </ligandPart>
</feature>
<feature type="binding site" description="axial binding residue" evidence="2">
    <location>
        <position position="196"/>
    </location>
    <ligand>
        <name>heme b</name>
        <dbReference type="ChEBI" id="CHEBI:60344"/>
        <label>b566</label>
    </ligand>
    <ligandPart>
        <name>Fe</name>
        <dbReference type="ChEBI" id="CHEBI:18248"/>
    </ligandPart>
</feature>
<feature type="binding site" evidence="2">
    <location>
        <position position="201"/>
    </location>
    <ligand>
        <name>a ubiquinone</name>
        <dbReference type="ChEBI" id="CHEBI:16389"/>
    </ligand>
</feature>
<reference key="1">
    <citation type="journal article" date="1999" name="J. Mammal. Evol.">
        <title>Phylogenetic relationships and the radiation of sigmodontine rodents in South America: evidence from cytochrome b.</title>
        <authorList>
            <person name="Smith M.F."/>
            <person name="Patton J.L."/>
        </authorList>
    </citation>
    <scope>NUCLEOTIDE SEQUENCE [GENOMIC DNA]</scope>
    <source>
        <strain>Isolate MVZ 173975</strain>
    </source>
</reference>
<keyword id="KW-0249">Electron transport</keyword>
<keyword id="KW-0349">Heme</keyword>
<keyword id="KW-0408">Iron</keyword>
<keyword id="KW-0472">Membrane</keyword>
<keyword id="KW-0479">Metal-binding</keyword>
<keyword id="KW-0496">Mitochondrion</keyword>
<keyword id="KW-0999">Mitochondrion inner membrane</keyword>
<keyword id="KW-0679">Respiratory chain</keyword>
<keyword id="KW-0812">Transmembrane</keyword>
<keyword id="KW-1133">Transmembrane helix</keyword>
<keyword id="KW-0813">Transport</keyword>
<keyword id="KW-0830">Ubiquinone</keyword>